<name>COBO_PSEAE</name>
<protein>
    <recommendedName>
        <fullName>Corrinoid adenosyltransferase</fullName>
        <ecNumber>2.5.1.17</ecNumber>
    </recommendedName>
    <alternativeName>
        <fullName>Cob(II)alamin adenosyltransferase</fullName>
    </alternativeName>
    <alternativeName>
        <fullName>Cob(II)yrinic acid a,c-diamide adenosyltransferase</fullName>
    </alternativeName>
    <alternativeName>
        <fullName>Cobinamide/cobalamin adenosyltransferase</fullName>
    </alternativeName>
</protein>
<proteinExistence type="inferred from homology"/>
<organism>
    <name type="scientific">Pseudomonas aeruginosa (strain ATCC 15692 / DSM 22644 / CIP 104116 / JCM 14847 / LMG 12228 / 1C / PRS 101 / PAO1)</name>
    <dbReference type="NCBI Taxonomy" id="208964"/>
    <lineage>
        <taxon>Bacteria</taxon>
        <taxon>Pseudomonadati</taxon>
        <taxon>Pseudomonadota</taxon>
        <taxon>Gammaproteobacteria</taxon>
        <taxon>Pseudomonadales</taxon>
        <taxon>Pseudomonadaceae</taxon>
        <taxon>Pseudomonas</taxon>
    </lineage>
</organism>
<feature type="chain" id="PRO_0000287788" description="Corrinoid adenosyltransferase">
    <location>
        <begin position="1"/>
        <end position="203"/>
    </location>
</feature>
<feature type="region of interest" description="Disordered" evidence="2">
    <location>
        <begin position="1"/>
        <end position="21"/>
    </location>
</feature>
<feature type="binding site" evidence="1">
    <location>
        <begin position="41"/>
        <end position="47"/>
    </location>
    <ligand>
        <name>ATP</name>
        <dbReference type="ChEBI" id="CHEBI:30616"/>
    </ligand>
</feature>
<gene>
    <name type="primary">cobO</name>
    <name type="ordered locus">PA1272</name>
</gene>
<keyword id="KW-0067">ATP-binding</keyword>
<keyword id="KW-0169">Cobalamin biosynthesis</keyword>
<keyword id="KW-0963">Cytoplasm</keyword>
<keyword id="KW-0464">Manganese</keyword>
<keyword id="KW-0547">Nucleotide-binding</keyword>
<keyword id="KW-0627">Porphyrin biosynthesis</keyword>
<keyword id="KW-1185">Reference proteome</keyword>
<keyword id="KW-0808">Transferase</keyword>
<comment type="function">
    <text evidence="1">Required for both de novo synthesis of the corrin ring for the assimilation of exogenous corrinoids. Participates in the adenosylation of a variety of incomplete and complete corrinoids (By similarity).</text>
</comment>
<comment type="catalytic activity">
    <reaction>
        <text>2 cob(II)yrinate a,c diamide + reduced [electron-transfer flavoprotein] + 2 ATP = 2 adenosylcob(III)yrinate a,c-diamide + 2 triphosphate + oxidized [electron-transfer flavoprotein] + 3 H(+)</text>
        <dbReference type="Rhea" id="RHEA:11528"/>
        <dbReference type="Rhea" id="RHEA-COMP:10685"/>
        <dbReference type="Rhea" id="RHEA-COMP:10686"/>
        <dbReference type="ChEBI" id="CHEBI:15378"/>
        <dbReference type="ChEBI" id="CHEBI:18036"/>
        <dbReference type="ChEBI" id="CHEBI:30616"/>
        <dbReference type="ChEBI" id="CHEBI:57692"/>
        <dbReference type="ChEBI" id="CHEBI:58307"/>
        <dbReference type="ChEBI" id="CHEBI:58503"/>
        <dbReference type="ChEBI" id="CHEBI:58537"/>
        <dbReference type="EC" id="2.5.1.17"/>
    </reaction>
</comment>
<comment type="catalytic activity">
    <reaction>
        <text>2 cob(II)alamin + reduced [electron-transfer flavoprotein] + 2 ATP = 2 adenosylcob(III)alamin + 2 triphosphate + oxidized [electron-transfer flavoprotein] + 3 H(+)</text>
        <dbReference type="Rhea" id="RHEA:28671"/>
        <dbReference type="Rhea" id="RHEA-COMP:10685"/>
        <dbReference type="Rhea" id="RHEA-COMP:10686"/>
        <dbReference type="ChEBI" id="CHEBI:15378"/>
        <dbReference type="ChEBI" id="CHEBI:16304"/>
        <dbReference type="ChEBI" id="CHEBI:18036"/>
        <dbReference type="ChEBI" id="CHEBI:18408"/>
        <dbReference type="ChEBI" id="CHEBI:30616"/>
        <dbReference type="ChEBI" id="CHEBI:57692"/>
        <dbReference type="ChEBI" id="CHEBI:58307"/>
        <dbReference type="EC" id="2.5.1.17"/>
    </reaction>
</comment>
<comment type="cofactor">
    <cofactor evidence="1">
        <name>Mn(2+)</name>
        <dbReference type="ChEBI" id="CHEBI:29035"/>
    </cofactor>
</comment>
<comment type="pathway">
    <text>Cofactor biosynthesis; adenosylcobalamin biosynthesis; adenosylcobalamin from cob(II)yrinate a,c-diamide: step 2/7.</text>
</comment>
<comment type="subunit">
    <text evidence="1">Monomer.</text>
</comment>
<comment type="subcellular location">
    <subcellularLocation>
        <location evidence="1">Cytoplasm</location>
    </subcellularLocation>
</comment>
<comment type="similarity">
    <text evidence="3">Belongs to the Cob(I)alamin adenosyltransferase family.</text>
</comment>
<evidence type="ECO:0000250" key="1"/>
<evidence type="ECO:0000256" key="2">
    <source>
        <dbReference type="SAM" id="MobiDB-lite"/>
    </source>
</evidence>
<evidence type="ECO:0000305" key="3"/>
<reference key="1">
    <citation type="journal article" date="2000" name="Nature">
        <title>Complete genome sequence of Pseudomonas aeruginosa PAO1, an opportunistic pathogen.</title>
        <authorList>
            <person name="Stover C.K."/>
            <person name="Pham X.-Q.T."/>
            <person name="Erwin A.L."/>
            <person name="Mizoguchi S.D."/>
            <person name="Warrener P."/>
            <person name="Hickey M.J."/>
            <person name="Brinkman F.S.L."/>
            <person name="Hufnagle W.O."/>
            <person name="Kowalik D.J."/>
            <person name="Lagrou M."/>
            <person name="Garber R.L."/>
            <person name="Goltry L."/>
            <person name="Tolentino E."/>
            <person name="Westbrock-Wadman S."/>
            <person name="Yuan Y."/>
            <person name="Brody L.L."/>
            <person name="Coulter S.N."/>
            <person name="Folger K.R."/>
            <person name="Kas A."/>
            <person name="Larbig K."/>
            <person name="Lim R.M."/>
            <person name="Smith K.A."/>
            <person name="Spencer D.H."/>
            <person name="Wong G.K.-S."/>
            <person name="Wu Z."/>
            <person name="Paulsen I.T."/>
            <person name="Reizer J."/>
            <person name="Saier M.H. Jr."/>
            <person name="Hancock R.E.W."/>
            <person name="Lory S."/>
            <person name="Olson M.V."/>
        </authorList>
    </citation>
    <scope>NUCLEOTIDE SEQUENCE [LARGE SCALE GENOMIC DNA]</scope>
    <source>
        <strain>ATCC 15692 / DSM 22644 / CIP 104116 / JCM 14847 / LMG 12228 / 1C / PRS 101 / PAO1</strain>
    </source>
</reference>
<dbReference type="EC" id="2.5.1.17"/>
<dbReference type="EMBL" id="AE004091">
    <property type="protein sequence ID" value="AAG04661.1"/>
    <property type="molecule type" value="Genomic_DNA"/>
</dbReference>
<dbReference type="PIR" id="F83485">
    <property type="entry name" value="F83485"/>
</dbReference>
<dbReference type="RefSeq" id="NP_249963.1">
    <property type="nucleotide sequence ID" value="NC_002516.2"/>
</dbReference>
<dbReference type="RefSeq" id="WP_003086769.1">
    <property type="nucleotide sequence ID" value="NZ_QZGE01000005.1"/>
</dbReference>
<dbReference type="SMR" id="Q9I472"/>
<dbReference type="FunCoup" id="Q9I472">
    <property type="interactions" value="215"/>
</dbReference>
<dbReference type="STRING" id="208964.PA1272"/>
<dbReference type="PaxDb" id="208964-PA1272"/>
<dbReference type="GeneID" id="881408"/>
<dbReference type="KEGG" id="pae:PA1272"/>
<dbReference type="PATRIC" id="fig|208964.12.peg.1322"/>
<dbReference type="PseudoCAP" id="PA1272"/>
<dbReference type="HOGENOM" id="CLU_088595_0_0_6"/>
<dbReference type="InParanoid" id="Q9I472"/>
<dbReference type="OrthoDB" id="9810309at2"/>
<dbReference type="PhylomeDB" id="Q9I472"/>
<dbReference type="BioCyc" id="PAER208964:G1FZ6-1297-MONOMER"/>
<dbReference type="UniPathway" id="UPA00148">
    <property type="reaction ID" value="UER00233"/>
</dbReference>
<dbReference type="Proteomes" id="UP000002438">
    <property type="component" value="Chromosome"/>
</dbReference>
<dbReference type="GO" id="GO:0005737">
    <property type="term" value="C:cytoplasm"/>
    <property type="evidence" value="ECO:0007669"/>
    <property type="project" value="UniProtKB-SubCell"/>
</dbReference>
<dbReference type="GO" id="GO:0005524">
    <property type="term" value="F:ATP binding"/>
    <property type="evidence" value="ECO:0007669"/>
    <property type="project" value="UniProtKB-KW"/>
</dbReference>
<dbReference type="GO" id="GO:0008817">
    <property type="term" value="F:corrinoid adenosyltransferase activity"/>
    <property type="evidence" value="ECO:0007669"/>
    <property type="project" value="UniProtKB-EC"/>
</dbReference>
<dbReference type="GO" id="GO:0009236">
    <property type="term" value="P:cobalamin biosynthetic process"/>
    <property type="evidence" value="ECO:0000318"/>
    <property type="project" value="GO_Central"/>
</dbReference>
<dbReference type="GO" id="GO:0006779">
    <property type="term" value="P:porphyrin-containing compound biosynthetic process"/>
    <property type="evidence" value="ECO:0007669"/>
    <property type="project" value="UniProtKB-KW"/>
</dbReference>
<dbReference type="CDD" id="cd00561">
    <property type="entry name" value="CobA_ACA"/>
    <property type="match status" value="1"/>
</dbReference>
<dbReference type="Gene3D" id="3.40.50.300">
    <property type="entry name" value="P-loop containing nucleotide triphosphate hydrolases"/>
    <property type="match status" value="1"/>
</dbReference>
<dbReference type="InterPro" id="IPR003724">
    <property type="entry name" value="CblAdoTrfase_CobA"/>
</dbReference>
<dbReference type="InterPro" id="IPR025826">
    <property type="entry name" value="Co_AT_N_dom"/>
</dbReference>
<dbReference type="InterPro" id="IPR027417">
    <property type="entry name" value="P-loop_NTPase"/>
</dbReference>
<dbReference type="NCBIfam" id="TIGR00708">
    <property type="entry name" value="cobA"/>
    <property type="match status" value="1"/>
</dbReference>
<dbReference type="NCBIfam" id="NF004637">
    <property type="entry name" value="PRK05986.1"/>
    <property type="match status" value="1"/>
</dbReference>
<dbReference type="PANTHER" id="PTHR46638">
    <property type="entry name" value="CORRINOID ADENOSYLTRANSFERASE"/>
    <property type="match status" value="1"/>
</dbReference>
<dbReference type="PANTHER" id="PTHR46638:SF1">
    <property type="entry name" value="CORRINOID ADENOSYLTRANSFERASE"/>
    <property type="match status" value="1"/>
</dbReference>
<dbReference type="Pfam" id="PF12557">
    <property type="entry name" value="Co_AT_N"/>
    <property type="match status" value="1"/>
</dbReference>
<dbReference type="Pfam" id="PF02572">
    <property type="entry name" value="CobA_CobO_BtuR"/>
    <property type="match status" value="1"/>
</dbReference>
<dbReference type="PIRSF" id="PIRSF015617">
    <property type="entry name" value="Adensltrnsf_CobA"/>
    <property type="match status" value="1"/>
</dbReference>
<dbReference type="SUPFAM" id="SSF52540">
    <property type="entry name" value="P-loop containing nucleoside triphosphate hydrolases"/>
    <property type="match status" value="1"/>
</dbReference>
<sequence>MNESPEKDQRHRERMERKKAVVDEKIAQARDERGVLLVHSGNGKGKSSSAFGMVARALGHGMKVGVVQFIKGAASTGEEAFFRRFPEEVSYHVMGEGFTWETQDRQRDIAKAEAAWKVAAQLLADPDVGLVVLDELNIALKHGYLELDRVLADIQARPAMQHVVVTGRGAQPGMIEAADTVTEMSLVKHAFKAGIKAQKGVEF</sequence>
<accession>Q9I472</accession>